<organism>
    <name type="scientific">Pongo pygmaeus</name>
    <name type="common">Bornean orangutan</name>
    <dbReference type="NCBI Taxonomy" id="9600"/>
    <lineage>
        <taxon>Eukaryota</taxon>
        <taxon>Metazoa</taxon>
        <taxon>Chordata</taxon>
        <taxon>Craniata</taxon>
        <taxon>Vertebrata</taxon>
        <taxon>Euteleostomi</taxon>
        <taxon>Mammalia</taxon>
        <taxon>Eutheria</taxon>
        <taxon>Euarchontoglires</taxon>
        <taxon>Primates</taxon>
        <taxon>Haplorrhini</taxon>
        <taxon>Catarrhini</taxon>
        <taxon>Hominidae</taxon>
        <taxon>Pongo</taxon>
    </lineage>
</organism>
<feature type="chain" id="PRO_0000082260" description="Taste receptor type 2 member 14">
    <location>
        <begin position="1"/>
        <end position="318"/>
    </location>
</feature>
<feature type="topological domain" description="Extracellular" evidence="1">
    <location>
        <begin position="1"/>
        <end position="7"/>
    </location>
</feature>
<feature type="transmembrane region" description="Helical; Name=1" evidence="1">
    <location>
        <begin position="8"/>
        <end position="28"/>
    </location>
</feature>
<feature type="topological domain" description="Cytoplasmic" evidence="1">
    <location>
        <begin position="29"/>
        <end position="55"/>
    </location>
</feature>
<feature type="transmembrane region" description="Helical; Name=2" evidence="1">
    <location>
        <begin position="56"/>
        <end position="76"/>
    </location>
</feature>
<feature type="topological domain" description="Extracellular" evidence="1">
    <location>
        <begin position="77"/>
        <end position="87"/>
    </location>
</feature>
<feature type="transmembrane region" description="Helical; Name=3" evidence="1">
    <location>
        <begin position="88"/>
        <end position="108"/>
    </location>
</feature>
<feature type="topological domain" description="Cytoplasmic" evidence="1">
    <location>
        <begin position="109"/>
        <end position="129"/>
    </location>
</feature>
<feature type="transmembrane region" description="Helical; Name=4" evidence="1">
    <location>
        <begin position="130"/>
        <end position="150"/>
    </location>
</feature>
<feature type="topological domain" description="Extracellular" evidence="1">
    <location>
        <begin position="151"/>
        <end position="184"/>
    </location>
</feature>
<feature type="transmembrane region" description="Helical; Name=5" evidence="1">
    <location>
        <begin position="185"/>
        <end position="205"/>
    </location>
</feature>
<feature type="topological domain" description="Cytoplasmic" evidence="1">
    <location>
        <begin position="206"/>
        <end position="232"/>
    </location>
</feature>
<feature type="transmembrane region" description="Helical; Name=6" evidence="1">
    <location>
        <begin position="233"/>
        <end position="253"/>
    </location>
</feature>
<feature type="topological domain" description="Extracellular" evidence="1">
    <location>
        <begin position="254"/>
        <end position="261"/>
    </location>
</feature>
<feature type="transmembrane region" description="Helical; Name=7" evidence="1">
    <location>
        <begin position="262"/>
        <end position="282"/>
    </location>
</feature>
<feature type="topological domain" description="Cytoplasmic" evidence="1">
    <location>
        <begin position="283"/>
        <end position="317"/>
    </location>
</feature>
<feature type="binding site" evidence="1">
    <location>
        <position position="86"/>
    </location>
    <ligand>
        <name>cholesterol</name>
        <dbReference type="ChEBI" id="CHEBI:16113"/>
    </ligand>
</feature>
<feature type="binding site" evidence="1">
    <location>
        <position position="89"/>
    </location>
    <ligand>
        <name>cholesterol</name>
        <dbReference type="ChEBI" id="CHEBI:16113"/>
    </ligand>
</feature>
<feature type="binding site" evidence="1">
    <location>
        <position position="180"/>
    </location>
    <ligand>
        <name>cholesterol</name>
        <dbReference type="ChEBI" id="CHEBI:16113"/>
    </ligand>
</feature>
<feature type="binding site" evidence="1">
    <location>
        <position position="265"/>
    </location>
    <ligand>
        <name>cholesterol</name>
        <dbReference type="ChEBI" id="CHEBI:16113"/>
    </ligand>
</feature>
<feature type="binding site" evidence="1">
    <location>
        <position position="268"/>
    </location>
    <ligand>
        <name>cholesterol</name>
        <dbReference type="ChEBI" id="CHEBI:16113"/>
    </ligand>
</feature>
<feature type="glycosylation site" description="N-linked (GlcNAc...) asparagine" evidence="2">
    <location>
        <position position="153"/>
    </location>
</feature>
<feature type="glycosylation site" description="N-linked (GlcNAc...) asparagine" evidence="2">
    <location>
        <position position="162"/>
    </location>
</feature>
<accession>Q645V2</accession>
<name>T2R14_PONPY</name>
<gene>
    <name type="primary">TAS2R14</name>
</gene>
<sequence length="318" mass="35872">MGGVIKNISTFVLIVEFIIGNLGNSFIALVNCIDWVKRRKISLVDQLLTALAISRISLVWLIFGSWCVSAFFPALFATEKMFRMLTNIWAVTNHFSVWLATGLGTFYFLKIANFSNSIFIYLKWRVKKVVLVLLLVTSVFLFLNIALINIHINASINGYGGNKTCSSDSNDFTRFSSLIALTSSVFIFIPFILSLAIFLLLTFSLWKHCKKMQHTVKASGDASTKAHRGVMQTVIAFLLLYPIFSLSFFIAVWTSGWLEENLIILSQVMGMAYPSCHSCILILGNKKLRQASLSVLWWLKYRFKDGEPSGHKGFRESS</sequence>
<reference key="1">
    <citation type="journal article" date="2005" name="Mol. Biol. Evol.">
        <title>Evolution of bitter taste receptors in humans and apes.</title>
        <authorList>
            <person name="Fischer A."/>
            <person name="Gilad Y."/>
            <person name="Man O."/>
            <person name="Paeaebo S."/>
        </authorList>
    </citation>
    <scope>NUCLEOTIDE SEQUENCE [GENOMIC DNA]</scope>
</reference>
<dbReference type="EMBL" id="AY724975">
    <property type="protein sequence ID" value="AAU21167.1"/>
    <property type="molecule type" value="Genomic_DNA"/>
</dbReference>
<dbReference type="RefSeq" id="XP_054301327.1">
    <property type="nucleotide sequence ID" value="XM_054445352.2"/>
</dbReference>
<dbReference type="SMR" id="Q645V2"/>
<dbReference type="GlyCosmos" id="Q645V2">
    <property type="glycosylation" value="2 sites, No reported glycans"/>
</dbReference>
<dbReference type="GeneID" id="129010819"/>
<dbReference type="GO" id="GO:0005886">
    <property type="term" value="C:plasma membrane"/>
    <property type="evidence" value="ECO:0007669"/>
    <property type="project" value="UniProtKB-ARBA"/>
</dbReference>
<dbReference type="GO" id="GO:0033038">
    <property type="term" value="F:bitter taste receptor activity"/>
    <property type="evidence" value="ECO:0007669"/>
    <property type="project" value="InterPro"/>
</dbReference>
<dbReference type="GO" id="GO:0004930">
    <property type="term" value="F:G protein-coupled receptor activity"/>
    <property type="evidence" value="ECO:0007669"/>
    <property type="project" value="UniProtKB-KW"/>
</dbReference>
<dbReference type="CDD" id="cd15019">
    <property type="entry name" value="7tm_TAS2R14-like"/>
    <property type="match status" value="1"/>
</dbReference>
<dbReference type="FunFam" id="1.20.1070.10:FF:000042">
    <property type="entry name" value="Taste receptor type 2 member 7"/>
    <property type="match status" value="1"/>
</dbReference>
<dbReference type="Gene3D" id="1.20.1070.10">
    <property type="entry name" value="Rhodopsin 7-helix transmembrane proteins"/>
    <property type="match status" value="1"/>
</dbReference>
<dbReference type="InterPro" id="IPR007960">
    <property type="entry name" value="TAS2R"/>
</dbReference>
<dbReference type="PANTHER" id="PTHR11394">
    <property type="entry name" value="TASTE RECEPTOR TYPE 2"/>
    <property type="match status" value="1"/>
</dbReference>
<dbReference type="PANTHER" id="PTHR11394:SF23">
    <property type="entry name" value="TASTE RECEPTOR TYPE 2 MEMBER 14"/>
    <property type="match status" value="1"/>
</dbReference>
<dbReference type="Pfam" id="PF05296">
    <property type="entry name" value="TAS2R"/>
    <property type="match status" value="1"/>
</dbReference>
<dbReference type="SUPFAM" id="SSF81321">
    <property type="entry name" value="Family A G protein-coupled receptor-like"/>
    <property type="match status" value="1"/>
</dbReference>
<proteinExistence type="inferred from homology"/>
<protein>
    <recommendedName>
        <fullName>Taste receptor type 2 member 14</fullName>
        <shortName>T2R14</shortName>
    </recommendedName>
</protein>
<evidence type="ECO:0000250" key="1">
    <source>
        <dbReference type="UniProtKB" id="Q9NYV8"/>
    </source>
</evidence>
<evidence type="ECO:0000255" key="2"/>
<evidence type="ECO:0000305" key="3"/>
<comment type="function">
    <text evidence="1">Gustducin-linked G-protein coupled receptor that plays a role in the perception of bitterness (By similarity). The activity of this receptor stimulates GNAT3, activating the gustducin G-protein pathway (By similarity). Likely plays a role in sensing the chemical composition of the gastrointestinal content and other extra-oral tissues via the inhibitory G-protein pathways (By similarity).</text>
</comment>
<comment type="catalytic activity">
    <reaction evidence="1">
        <text>Ca(2+)(in) = Ca(2+)(out)</text>
        <dbReference type="Rhea" id="RHEA:29671"/>
        <dbReference type="ChEBI" id="CHEBI:29108"/>
    </reaction>
</comment>
<comment type="catalytic activity">
    <reaction evidence="1">
        <text>3',5'-cyclic AMP(in) = 3',5'-cyclic AMP(out)</text>
        <dbReference type="Rhea" id="RHEA:76223"/>
        <dbReference type="ChEBI" id="CHEBI:58165"/>
    </reaction>
</comment>
<comment type="activity regulation">
    <text evidence="1">Basal activity is enhanced by binding to bitter tastants, such as flufenamic acid and aristolochic acid (By similarity). Regulated by cholesterol in a concentration-dependent manner (By similarity).</text>
</comment>
<comment type="subunit">
    <text evidence="1">Core component of the TAS2R14-GNAI1 complex, consisting of TAS2R14, GNAI1, GNB1 and GNG2; within the complex interacts with GNAI1 (By similarity). Core component of the TAS2R14-GNAT3 complex, consisting of TAS2R14, GNAT3, GNB1 and GNG2; within the complex interacts with GNAT3 (By similarity). Core component of the TAS2R14-GNAS2 complex, consisting of TAS2R14, GNAS2, GNB1 and GNG2; within the complex interacts with GNAS2 (By similarity).</text>
</comment>
<comment type="subcellular location">
    <subcellularLocation>
        <location>Membrane</location>
        <topology evidence="1">Multi-pass membrane protein</topology>
    </subcellularLocation>
</comment>
<comment type="miscellaneous">
    <text>Most taste cells may be activated by a limited number of bitter compounds; individual taste cells can discriminate among bitter stimuli.</text>
</comment>
<comment type="similarity">
    <text evidence="3">Belongs to the G-protein coupled receptor T2R family.</text>
</comment>
<keyword id="KW-0297">G-protein coupled receptor</keyword>
<keyword id="KW-0325">Glycoprotein</keyword>
<keyword id="KW-0472">Membrane</keyword>
<keyword id="KW-0675">Receptor</keyword>
<keyword id="KW-0716">Sensory transduction</keyword>
<keyword id="KW-0919">Taste</keyword>
<keyword id="KW-0807">Transducer</keyword>
<keyword id="KW-0812">Transmembrane</keyword>
<keyword id="KW-1133">Transmembrane helix</keyword>